<keyword id="KW-0175">Coiled coil</keyword>
<keyword id="KW-0968">Cytoplasmic vesicle</keyword>
<keyword id="KW-0217">Developmental protein</keyword>
<keyword id="KW-0333">Golgi apparatus</keyword>
<keyword id="KW-0597">Phosphoprotein</keyword>
<keyword id="KW-1185">Reference proteome</keyword>
<reference evidence="6" key="1">
    <citation type="journal article" date="2000" name="Science">
        <title>The genome sequence of Drosophila melanogaster.</title>
        <authorList>
            <person name="Adams M.D."/>
            <person name="Celniker S.E."/>
            <person name="Holt R.A."/>
            <person name="Evans C.A."/>
            <person name="Gocayne J.D."/>
            <person name="Amanatides P.G."/>
            <person name="Scherer S.E."/>
            <person name="Li P.W."/>
            <person name="Hoskins R.A."/>
            <person name="Galle R.F."/>
            <person name="George R.A."/>
            <person name="Lewis S.E."/>
            <person name="Richards S."/>
            <person name="Ashburner M."/>
            <person name="Henderson S.N."/>
            <person name="Sutton G.G."/>
            <person name="Wortman J.R."/>
            <person name="Yandell M.D."/>
            <person name="Zhang Q."/>
            <person name="Chen L.X."/>
            <person name="Brandon R.C."/>
            <person name="Rogers Y.-H.C."/>
            <person name="Blazej R.G."/>
            <person name="Champe M."/>
            <person name="Pfeiffer B.D."/>
            <person name="Wan K.H."/>
            <person name="Doyle C."/>
            <person name="Baxter E.G."/>
            <person name="Helt G."/>
            <person name="Nelson C.R."/>
            <person name="Miklos G.L.G."/>
            <person name="Abril J.F."/>
            <person name="Agbayani A."/>
            <person name="An H.-J."/>
            <person name="Andrews-Pfannkoch C."/>
            <person name="Baldwin D."/>
            <person name="Ballew R.M."/>
            <person name="Basu A."/>
            <person name="Baxendale J."/>
            <person name="Bayraktaroglu L."/>
            <person name="Beasley E.M."/>
            <person name="Beeson K.Y."/>
            <person name="Benos P.V."/>
            <person name="Berman B.P."/>
            <person name="Bhandari D."/>
            <person name="Bolshakov S."/>
            <person name="Borkova D."/>
            <person name="Botchan M.R."/>
            <person name="Bouck J."/>
            <person name="Brokstein P."/>
            <person name="Brottier P."/>
            <person name="Burtis K.C."/>
            <person name="Busam D.A."/>
            <person name="Butler H."/>
            <person name="Cadieu E."/>
            <person name="Center A."/>
            <person name="Chandra I."/>
            <person name="Cherry J.M."/>
            <person name="Cawley S."/>
            <person name="Dahlke C."/>
            <person name="Davenport L.B."/>
            <person name="Davies P."/>
            <person name="de Pablos B."/>
            <person name="Delcher A."/>
            <person name="Deng Z."/>
            <person name="Mays A.D."/>
            <person name="Dew I."/>
            <person name="Dietz S.M."/>
            <person name="Dodson K."/>
            <person name="Doup L.E."/>
            <person name="Downes M."/>
            <person name="Dugan-Rocha S."/>
            <person name="Dunkov B.C."/>
            <person name="Dunn P."/>
            <person name="Durbin K.J."/>
            <person name="Evangelista C.C."/>
            <person name="Ferraz C."/>
            <person name="Ferriera S."/>
            <person name="Fleischmann W."/>
            <person name="Fosler C."/>
            <person name="Gabrielian A.E."/>
            <person name="Garg N.S."/>
            <person name="Gelbart W.M."/>
            <person name="Glasser K."/>
            <person name="Glodek A."/>
            <person name="Gong F."/>
            <person name="Gorrell J.H."/>
            <person name="Gu Z."/>
            <person name="Guan P."/>
            <person name="Harris M."/>
            <person name="Harris N.L."/>
            <person name="Harvey D.A."/>
            <person name="Heiman T.J."/>
            <person name="Hernandez J.R."/>
            <person name="Houck J."/>
            <person name="Hostin D."/>
            <person name="Houston K.A."/>
            <person name="Howland T.J."/>
            <person name="Wei M.-H."/>
            <person name="Ibegwam C."/>
            <person name="Jalali M."/>
            <person name="Kalush F."/>
            <person name="Karpen G.H."/>
            <person name="Ke Z."/>
            <person name="Kennison J.A."/>
            <person name="Ketchum K.A."/>
            <person name="Kimmel B.E."/>
            <person name="Kodira C.D."/>
            <person name="Kraft C.L."/>
            <person name="Kravitz S."/>
            <person name="Kulp D."/>
            <person name="Lai Z."/>
            <person name="Lasko P."/>
            <person name="Lei Y."/>
            <person name="Levitsky A.A."/>
            <person name="Li J.H."/>
            <person name="Li Z."/>
            <person name="Liang Y."/>
            <person name="Lin X."/>
            <person name="Liu X."/>
            <person name="Mattei B."/>
            <person name="McIntosh T.C."/>
            <person name="McLeod M.P."/>
            <person name="McPherson D."/>
            <person name="Merkulov G."/>
            <person name="Milshina N.V."/>
            <person name="Mobarry C."/>
            <person name="Morris J."/>
            <person name="Moshrefi A."/>
            <person name="Mount S.M."/>
            <person name="Moy M."/>
            <person name="Murphy B."/>
            <person name="Murphy L."/>
            <person name="Muzny D.M."/>
            <person name="Nelson D.L."/>
            <person name="Nelson D.R."/>
            <person name="Nelson K.A."/>
            <person name="Nixon K."/>
            <person name="Nusskern D.R."/>
            <person name="Pacleb J.M."/>
            <person name="Palazzolo M."/>
            <person name="Pittman G.S."/>
            <person name="Pan S."/>
            <person name="Pollard J."/>
            <person name="Puri V."/>
            <person name="Reese M.G."/>
            <person name="Reinert K."/>
            <person name="Remington K."/>
            <person name="Saunders R.D.C."/>
            <person name="Scheeler F."/>
            <person name="Shen H."/>
            <person name="Shue B.C."/>
            <person name="Siden-Kiamos I."/>
            <person name="Simpson M."/>
            <person name="Skupski M.P."/>
            <person name="Smith T.J."/>
            <person name="Spier E."/>
            <person name="Spradling A.C."/>
            <person name="Stapleton M."/>
            <person name="Strong R."/>
            <person name="Sun E."/>
            <person name="Svirskas R."/>
            <person name="Tector C."/>
            <person name="Turner R."/>
            <person name="Venter E."/>
            <person name="Wang A.H."/>
            <person name="Wang X."/>
            <person name="Wang Z.-Y."/>
            <person name="Wassarman D.A."/>
            <person name="Weinstock G.M."/>
            <person name="Weissenbach J."/>
            <person name="Williams S.M."/>
            <person name="Woodage T."/>
            <person name="Worley K.C."/>
            <person name="Wu D."/>
            <person name="Yang S."/>
            <person name="Yao Q.A."/>
            <person name="Ye J."/>
            <person name="Yeh R.-F."/>
            <person name="Zaveri J.S."/>
            <person name="Zhan M."/>
            <person name="Zhang G."/>
            <person name="Zhao Q."/>
            <person name="Zheng L."/>
            <person name="Zheng X.H."/>
            <person name="Zhong F.N."/>
            <person name="Zhong W."/>
            <person name="Zhou X."/>
            <person name="Zhu S.C."/>
            <person name="Zhu X."/>
            <person name="Smith H.O."/>
            <person name="Gibbs R.A."/>
            <person name="Myers E.W."/>
            <person name="Rubin G.M."/>
            <person name="Venter J.C."/>
        </authorList>
    </citation>
    <scope>NUCLEOTIDE SEQUENCE [LARGE SCALE GENOMIC DNA]</scope>
    <source>
        <strain>Berkeley</strain>
    </source>
</reference>
<reference key="2">
    <citation type="journal article" date="2002" name="Genome Biol.">
        <title>Annotation of the Drosophila melanogaster euchromatic genome: a systematic review.</title>
        <authorList>
            <person name="Misra S."/>
            <person name="Crosby M.A."/>
            <person name="Mungall C.J."/>
            <person name="Matthews B.B."/>
            <person name="Campbell K.S."/>
            <person name="Hradecky P."/>
            <person name="Huang Y."/>
            <person name="Kaminker J.S."/>
            <person name="Millburn G.H."/>
            <person name="Prochnik S.E."/>
            <person name="Smith C.D."/>
            <person name="Tupy J.L."/>
            <person name="Whitfield E.J."/>
            <person name="Bayraktaroglu L."/>
            <person name="Berman B.P."/>
            <person name="Bettencourt B.R."/>
            <person name="Celniker S.E."/>
            <person name="de Grey A.D.N.J."/>
            <person name="Drysdale R.A."/>
            <person name="Harris N.L."/>
            <person name="Richter J."/>
            <person name="Russo S."/>
            <person name="Schroeder A.J."/>
            <person name="Shu S.Q."/>
            <person name="Stapleton M."/>
            <person name="Yamada C."/>
            <person name="Ashburner M."/>
            <person name="Gelbart W.M."/>
            <person name="Rubin G.M."/>
            <person name="Lewis S.E."/>
        </authorList>
    </citation>
    <scope>GENOME REANNOTATION</scope>
    <source>
        <strain>Berkeley</strain>
    </source>
</reference>
<reference evidence="6" key="3">
    <citation type="journal article" date="2002" name="Genome Biol.">
        <title>A Drosophila full-length cDNA resource.</title>
        <authorList>
            <person name="Stapleton M."/>
            <person name="Carlson J.W."/>
            <person name="Brokstein P."/>
            <person name="Yu C."/>
            <person name="Champe M."/>
            <person name="George R.A."/>
            <person name="Guarin H."/>
            <person name="Kronmiller B."/>
            <person name="Pacleb J.M."/>
            <person name="Park S."/>
            <person name="Wan K.H."/>
            <person name="Rubin G.M."/>
            <person name="Celniker S.E."/>
        </authorList>
    </citation>
    <scope>NUCLEOTIDE SEQUENCE [LARGE SCALE MRNA] OF 980-2779</scope>
    <source>
        <strain>Berkeley</strain>
        <tissue>Embryo</tissue>
    </source>
</reference>
<reference evidence="6" key="4">
    <citation type="journal article" date="2000" name="J. Cell Biol.">
        <title>Lava lamp, a novel peripheral Golgi protein, is required for Drosophila melanogaster cellularization.</title>
        <authorList>
            <person name="Sisson J.C."/>
            <person name="Field C."/>
            <person name="Ventura R."/>
            <person name="Royou A."/>
            <person name="Sullivan W."/>
        </authorList>
    </citation>
    <scope>FUNCTION</scope>
    <scope>SUBUNIT</scope>
    <scope>SUBCELLULAR LOCATION</scope>
</reference>
<reference key="5">
    <citation type="journal article" date="2008" name="J. Proteome Res.">
        <title>Phosphoproteome analysis of Drosophila melanogaster embryos.</title>
        <authorList>
            <person name="Zhai B."/>
            <person name="Villen J."/>
            <person name="Beausoleil S.A."/>
            <person name="Mintseris J."/>
            <person name="Gygi S.P."/>
        </authorList>
    </citation>
    <scope>PHOSPHORYLATION [LARGE SCALE ANALYSIS] AT SER-34; SER-35; SER-95; SER-98; SER-122; SER-133; SER-186; SER-352 AND SER-354</scope>
    <scope>IDENTIFICATION BY MASS SPECTROMETRY</scope>
    <source>
        <tissue>Embryo</tissue>
    </source>
</reference>
<reference key="6">
    <citation type="journal article" date="2012" name="Proc. Natl. Acad. Sci. U.S.A.">
        <title>Drosophila Golgi membrane protein Ema promotes autophagosomal growth and function.</title>
        <authorList>
            <person name="Kim S."/>
            <person name="Naylor S.A."/>
            <person name="DiAntonio A."/>
        </authorList>
    </citation>
    <scope>FUNCTION</scope>
    <scope>SUBCELLULAR LOCATION</scope>
</reference>
<protein>
    <recommendedName>
        <fullName>Protein lava lamp</fullName>
    </recommendedName>
</protein>
<evidence type="ECO:0000255" key="1"/>
<evidence type="ECO:0000256" key="2">
    <source>
        <dbReference type="SAM" id="MobiDB-lite"/>
    </source>
</evidence>
<evidence type="ECO:0000269" key="3">
    <source>
    </source>
</evidence>
<evidence type="ECO:0000269" key="4">
    <source>
    </source>
</evidence>
<evidence type="ECO:0000269" key="5">
    <source>
    </source>
</evidence>
<evidence type="ECO:0000305" key="6"/>
<evidence type="ECO:0000312" key="7">
    <source>
        <dbReference type="EMBL" id="AAM50007.1"/>
    </source>
</evidence>
<comment type="function">
    <text evidence="3 5">Lva and spectrin may form a Golgi-based scaffold that mediates interaction of Golgi bodies with microtubules and facilitates Golgi-derived membrane secretion required for the formation of furrows during cellularization (PubMed:11076973). Under starvation conditions recruited by ema to developing autophagsosomes where it may function in autophagosome growth (PubMed:22493244).</text>
</comment>
<comment type="subunit">
    <text evidence="3">Interacts with CLIP-190 and spectrin separately.</text>
</comment>
<comment type="subcellular location">
    <subcellularLocation>
        <location evidence="3 4">Golgi apparatus</location>
    </subcellularLocation>
    <subcellularLocation>
        <location evidence="5">Cytoplasmic vesicle</location>
        <location evidence="5">Autophagosome</location>
    </subcellularLocation>
    <text evidence="3 5">Lva-alpha-spectrin and Lva-CLIP-190 complexes are found at the Golgi (PubMed:11076973). Upon autophagosome induction by starvation, also detected in small vesicle structures (PubMed:22493244).</text>
</comment>
<comment type="sequence caution" evidence="6">
    <conflict type="erroneous initiation">
        <sequence resource="EMBL-CDS" id="AAM50007"/>
    </conflict>
</comment>
<feature type="chain" id="PRO_0000084526" description="Protein lava lamp">
    <location>
        <begin position="1"/>
        <end position="2779"/>
    </location>
</feature>
<feature type="region of interest" description="Disordered" evidence="2">
    <location>
        <begin position="31"/>
        <end position="62"/>
    </location>
</feature>
<feature type="region of interest" description="Disordered" evidence="2">
    <location>
        <begin position="79"/>
        <end position="98"/>
    </location>
</feature>
<feature type="region of interest" description="Disordered" evidence="2">
    <location>
        <begin position="110"/>
        <end position="135"/>
    </location>
</feature>
<feature type="region of interest" description="Disordered" evidence="2">
    <location>
        <begin position="337"/>
        <end position="366"/>
    </location>
</feature>
<feature type="region of interest" description="Disordered" evidence="2">
    <location>
        <begin position="622"/>
        <end position="662"/>
    </location>
</feature>
<feature type="region of interest" description="Disordered" evidence="2">
    <location>
        <begin position="711"/>
        <end position="730"/>
    </location>
</feature>
<feature type="region of interest" description="Disordered" evidence="2">
    <location>
        <begin position="1716"/>
        <end position="1753"/>
    </location>
</feature>
<feature type="region of interest" description="Disordered" evidence="2">
    <location>
        <begin position="2348"/>
        <end position="2367"/>
    </location>
</feature>
<feature type="region of interest" description="Disordered" evidence="2">
    <location>
        <begin position="2484"/>
        <end position="2507"/>
    </location>
</feature>
<feature type="region of interest" description="Disordered" evidence="2">
    <location>
        <begin position="2552"/>
        <end position="2578"/>
    </location>
</feature>
<feature type="region of interest" description="Disordered" evidence="2">
    <location>
        <begin position="2633"/>
        <end position="2665"/>
    </location>
</feature>
<feature type="coiled-coil region" evidence="1">
    <location>
        <begin position="52"/>
        <end position="85"/>
    </location>
</feature>
<feature type="coiled-coil region" evidence="1">
    <location>
        <begin position="141"/>
        <end position="175"/>
    </location>
</feature>
<feature type="coiled-coil region" evidence="1">
    <location>
        <begin position="220"/>
        <end position="607"/>
    </location>
</feature>
<feature type="coiled-coil region" evidence="1">
    <location>
        <begin position="659"/>
        <end position="716"/>
    </location>
</feature>
<feature type="coiled-coil region" evidence="1">
    <location>
        <begin position="751"/>
        <end position="1733"/>
    </location>
</feature>
<feature type="coiled-coil region" evidence="1">
    <location>
        <begin position="1785"/>
        <end position="1863"/>
    </location>
</feature>
<feature type="coiled-coil region" evidence="1">
    <location>
        <begin position="1941"/>
        <end position="2433"/>
    </location>
</feature>
<feature type="coiled-coil region" evidence="1">
    <location>
        <begin position="2504"/>
        <end position="2544"/>
    </location>
</feature>
<feature type="coiled-coil region" evidence="1">
    <location>
        <begin position="2600"/>
        <end position="2641"/>
    </location>
</feature>
<feature type="compositionally biased region" description="Polar residues" evidence="2">
    <location>
        <begin position="33"/>
        <end position="51"/>
    </location>
</feature>
<feature type="compositionally biased region" description="Basic and acidic residues" evidence="2">
    <location>
        <begin position="79"/>
        <end position="91"/>
    </location>
</feature>
<feature type="compositionally biased region" description="Basic and acidic residues" evidence="2">
    <location>
        <begin position="337"/>
        <end position="352"/>
    </location>
</feature>
<feature type="compositionally biased region" description="Low complexity" evidence="2">
    <location>
        <begin position="717"/>
        <end position="730"/>
    </location>
</feature>
<feature type="compositionally biased region" description="Low complexity" evidence="2">
    <location>
        <begin position="1716"/>
        <end position="1740"/>
    </location>
</feature>
<feature type="compositionally biased region" description="Low complexity" evidence="2">
    <location>
        <begin position="2488"/>
        <end position="2502"/>
    </location>
</feature>
<feature type="compositionally biased region" description="Low complexity" evidence="2">
    <location>
        <begin position="2643"/>
        <end position="2665"/>
    </location>
</feature>
<feature type="modified residue" description="Phosphoserine" evidence="4">
    <location>
        <position position="34"/>
    </location>
</feature>
<feature type="modified residue" description="Phosphoserine" evidence="4">
    <location>
        <position position="35"/>
    </location>
</feature>
<feature type="modified residue" description="Phosphoserine" evidence="4">
    <location>
        <position position="95"/>
    </location>
</feature>
<feature type="modified residue" description="Phosphoserine" evidence="4">
    <location>
        <position position="98"/>
    </location>
</feature>
<feature type="modified residue" description="Phosphoserine" evidence="4">
    <location>
        <position position="122"/>
    </location>
</feature>
<feature type="modified residue" description="Phosphoserine" evidence="4">
    <location>
        <position position="133"/>
    </location>
</feature>
<feature type="modified residue" description="Phosphoserine" evidence="4">
    <location>
        <position position="186"/>
    </location>
</feature>
<feature type="modified residue" description="Phosphoserine" evidence="4">
    <location>
        <position position="352"/>
    </location>
</feature>
<feature type="modified residue" description="Phosphoserine" evidence="4">
    <location>
        <position position="354"/>
    </location>
</feature>
<feature type="sequence conflict" description="In Ref. 3; AAM50007." evidence="6" ref="3">
    <original>E</original>
    <variation>K</variation>
    <location>
        <position position="1211"/>
    </location>
</feature>
<feature type="sequence conflict" description="In Ref. 3; AAM50007." evidence="6" ref="3">
    <original>A</original>
    <variation>S</variation>
    <location>
        <position position="1424"/>
    </location>
</feature>
<feature type="sequence conflict" description="In Ref. 3; AAM50007." evidence="6" ref="3">
    <original>E</original>
    <variation>D</variation>
    <location>
        <position position="1506"/>
    </location>
</feature>
<feature type="sequence conflict" description="In Ref. 3; AAM50007." evidence="6" ref="3">
    <original>A</original>
    <variation>V</variation>
    <location>
        <position position="2034"/>
    </location>
</feature>
<feature type="sequence conflict" description="In Ref. 3; AAM50007." evidence="6" ref="3">
    <original>Q</original>
    <variation>H</variation>
    <location>
        <position position="2069"/>
    </location>
</feature>
<feature type="sequence conflict" description="In Ref. 3; AAM50007." evidence="6" ref="3">
    <original>G</original>
    <variation>E</variation>
    <location>
        <position position="2133"/>
    </location>
</feature>
<feature type="sequence conflict" description="In Ref. 3; AAM50007." evidence="6" ref="3">
    <original>Q</original>
    <variation>E</variation>
    <location>
        <position position="2154"/>
    </location>
</feature>
<feature type="sequence conflict" description="In Ref. 3; AAM50007." evidence="6" ref="3">
    <original>E</original>
    <variation>V</variation>
    <location>
        <position position="2160"/>
    </location>
</feature>
<feature type="sequence conflict" description="In Ref. 3; AAM50007." evidence="6" ref="3">
    <original>L</original>
    <variation>P</variation>
    <location>
        <position position="2200"/>
    </location>
</feature>
<feature type="sequence conflict" description="In Ref. 3; AAM50007." evidence="6" ref="3">
    <original>A</original>
    <variation>T</variation>
    <location>
        <position position="2217"/>
    </location>
</feature>
<feature type="sequence conflict" description="In Ref. 3; AAM50007." evidence="6" ref="3">
    <original>E</original>
    <variation>D</variation>
    <location>
        <position position="2271"/>
    </location>
</feature>
<gene>
    <name type="primary">lva</name>
    <name type="ORF">CG6450</name>
</gene>
<name>LVA_DROME</name>
<organism evidence="7">
    <name type="scientific">Drosophila melanogaster</name>
    <name type="common">Fruit fly</name>
    <dbReference type="NCBI Taxonomy" id="7227"/>
    <lineage>
        <taxon>Eukaryota</taxon>
        <taxon>Metazoa</taxon>
        <taxon>Ecdysozoa</taxon>
        <taxon>Arthropoda</taxon>
        <taxon>Hexapoda</taxon>
        <taxon>Insecta</taxon>
        <taxon>Pterygota</taxon>
        <taxon>Neoptera</taxon>
        <taxon>Endopterygota</taxon>
        <taxon>Diptera</taxon>
        <taxon>Brachycera</taxon>
        <taxon>Muscomorpha</taxon>
        <taxon>Ephydroidea</taxon>
        <taxon>Drosophilidae</taxon>
        <taxon>Drosophila</taxon>
        <taxon>Sophophora</taxon>
    </lineage>
</organism>
<dbReference type="EMBL" id="AE014298">
    <property type="protein sequence ID" value="AAF45910.1"/>
    <property type="molecule type" value="Genomic_DNA"/>
</dbReference>
<dbReference type="EMBL" id="AY118638">
    <property type="protein sequence ID" value="AAM50007.1"/>
    <property type="status" value="ALT_INIT"/>
    <property type="molecule type" value="mRNA"/>
</dbReference>
<dbReference type="RefSeq" id="NP_001284849.1">
    <property type="nucleotide sequence ID" value="NM_001297920.1"/>
</dbReference>
<dbReference type="RefSeq" id="NP_525064.1">
    <property type="nucleotide sequence ID" value="NM_080325.4"/>
</dbReference>
<dbReference type="SMR" id="Q8MSS1"/>
<dbReference type="BioGRID" id="57868">
    <property type="interactions" value="30"/>
</dbReference>
<dbReference type="DIP" id="DIP-17967N"/>
<dbReference type="FunCoup" id="Q8MSS1">
    <property type="interactions" value="121"/>
</dbReference>
<dbReference type="IntAct" id="Q8MSS1">
    <property type="interactions" value="4"/>
</dbReference>
<dbReference type="MINT" id="Q8MSS1"/>
<dbReference type="STRING" id="7227.FBpp0070596"/>
<dbReference type="iPTMnet" id="Q8MSS1"/>
<dbReference type="PaxDb" id="7227-FBpp0070596"/>
<dbReference type="EnsemblMetazoa" id="FBtr0070626">
    <property type="protein sequence ID" value="FBpp0070596"/>
    <property type="gene ID" value="FBgn0029688"/>
</dbReference>
<dbReference type="EnsemblMetazoa" id="FBtr0342740">
    <property type="protein sequence ID" value="FBpp0309608"/>
    <property type="gene ID" value="FBgn0029688"/>
</dbReference>
<dbReference type="GeneID" id="31350"/>
<dbReference type="KEGG" id="dme:Dmel_CG6450"/>
<dbReference type="AGR" id="FB:FBgn0029688"/>
<dbReference type="CTD" id="31350"/>
<dbReference type="FlyBase" id="FBgn0029688">
    <property type="gene designation" value="lva"/>
</dbReference>
<dbReference type="VEuPathDB" id="VectorBase:FBgn0029688"/>
<dbReference type="eggNOG" id="ENOG502S5D8">
    <property type="taxonomic scope" value="Eukaryota"/>
</dbReference>
<dbReference type="HOGENOM" id="CLU_226592_0_0_1"/>
<dbReference type="InParanoid" id="Q8MSS1"/>
<dbReference type="OMA" id="YQRDMRC"/>
<dbReference type="OrthoDB" id="2441647at2759"/>
<dbReference type="PhylomeDB" id="Q8MSS1"/>
<dbReference type="SignaLink" id="Q8MSS1"/>
<dbReference type="BioGRID-ORCS" id="31350">
    <property type="hits" value="0 hits in 1 CRISPR screen"/>
</dbReference>
<dbReference type="ChiTaRS" id="lva">
    <property type="organism name" value="fly"/>
</dbReference>
<dbReference type="GenomeRNAi" id="31350"/>
<dbReference type="PRO" id="PR:Q8MSS1"/>
<dbReference type="Proteomes" id="UP000000803">
    <property type="component" value="Chromosome X"/>
</dbReference>
<dbReference type="Bgee" id="FBgn0029688">
    <property type="expression patterns" value="Expressed in male accessory gland main cell (Drosophila) in male reproductive gland and 211 other cell types or tissues"/>
</dbReference>
<dbReference type="ExpressionAtlas" id="Q8MSS1">
    <property type="expression patterns" value="baseline and differential"/>
</dbReference>
<dbReference type="GO" id="GO:0005776">
    <property type="term" value="C:autophagosome"/>
    <property type="evidence" value="ECO:0007669"/>
    <property type="project" value="UniProtKB-SubCell"/>
</dbReference>
<dbReference type="GO" id="GO:0005737">
    <property type="term" value="C:cytoplasm"/>
    <property type="evidence" value="ECO:0000318"/>
    <property type="project" value="GO_Central"/>
</dbReference>
<dbReference type="GO" id="GO:0031410">
    <property type="term" value="C:cytoplasmic vesicle"/>
    <property type="evidence" value="ECO:0007669"/>
    <property type="project" value="UniProtKB-KW"/>
</dbReference>
<dbReference type="GO" id="GO:0005794">
    <property type="term" value="C:Golgi apparatus"/>
    <property type="evidence" value="ECO:0000314"/>
    <property type="project" value="UniProtKB"/>
</dbReference>
<dbReference type="GO" id="GO:0000137">
    <property type="term" value="C:Golgi cis cisterna"/>
    <property type="evidence" value="ECO:0000314"/>
    <property type="project" value="FlyBase"/>
</dbReference>
<dbReference type="GO" id="GO:0032982">
    <property type="term" value="C:myosin filament"/>
    <property type="evidence" value="ECO:0000318"/>
    <property type="project" value="GO_Central"/>
</dbReference>
<dbReference type="GO" id="GO:0016460">
    <property type="term" value="C:myosin II complex"/>
    <property type="evidence" value="ECO:0000318"/>
    <property type="project" value="GO_Central"/>
</dbReference>
<dbReference type="GO" id="GO:0051015">
    <property type="term" value="F:actin filament binding"/>
    <property type="evidence" value="ECO:0000318"/>
    <property type="project" value="GO_Central"/>
</dbReference>
<dbReference type="GO" id="GO:0008017">
    <property type="term" value="F:microtubule binding"/>
    <property type="evidence" value="ECO:0000314"/>
    <property type="project" value="UniProtKB"/>
</dbReference>
<dbReference type="GO" id="GO:0030507">
    <property type="term" value="F:spectrin binding"/>
    <property type="evidence" value="ECO:0000304"/>
    <property type="project" value="FlyBase"/>
</dbReference>
<dbReference type="GO" id="GO:0007349">
    <property type="term" value="P:cellularization"/>
    <property type="evidence" value="ECO:0000315"/>
    <property type="project" value="UniProtKB"/>
</dbReference>
<dbReference type="GO" id="GO:0051683">
    <property type="term" value="P:establishment of Golgi localization"/>
    <property type="evidence" value="ECO:0000315"/>
    <property type="project" value="FlyBase"/>
</dbReference>
<dbReference type="GO" id="GO:0050775">
    <property type="term" value="P:positive regulation of dendrite morphogenesis"/>
    <property type="evidence" value="ECO:0000315"/>
    <property type="project" value="FlyBase"/>
</dbReference>
<dbReference type="PANTHER" id="PTHR45615:SF80">
    <property type="entry name" value="GRIP DOMAIN-CONTAINING PROTEIN"/>
    <property type="match status" value="1"/>
</dbReference>
<dbReference type="PANTHER" id="PTHR45615">
    <property type="entry name" value="MYOSIN HEAVY CHAIN, NON-MUSCLE"/>
    <property type="match status" value="1"/>
</dbReference>
<accession>Q8MSS1</accession>
<accession>Q9W4N7</accession>
<sequence length="2779" mass="315900">MAEDSGALESSYDFSIVQPDDHEYGEADIRLAGSSNDLSSLQNVSASTTRGTKGKGRLDSLKENLYKQQERLTALKERALRKSQDERHKSSMSDSMESLKTLGQKLTVLKTRSGDSSTPLVSPTKDSDPGDVSLLQTSGSEKLLMLTQRTEQNRALLEQRKRDLAKSLLSVKSNIGHQTTAELGSSMTDLRHAASVSNPPVSRHRSALDLEAQGQEAVDESRVKLLRSRMKLTELKQGRQEQELNELRTELAKRAKLIERLELSGAELQRTLTQRNEELEQLRVVQAEEDSLKVQENSRLQGEVLVLRERLAELENVNDLLETTRCELQEELTTARERQRNLELEQEQEKASRSPQSEAAHTDAQVSAELAKQLQELTNQLADLQATNEELRQQVAAQAKLQVTDEIVSQRLEELEATIAAQLLELQEQKSAMAAQNEELAEKTTELNVLNVNLRLLEEKLAQSSRSKPLFLEDHSEDSAASKQMQEDLQQLKLKLDETNKANIKLKLKCKQAEKKLQKFQSQDGQQQLASLLADNEELQQRIAVLEDEKGQWQLANMQEDDRQPEQSTESNNPLQLETIRLLEEQKLELQQALEALLSSSSSAESIEIVERHHLECLGQRRPASEGDAQEQKQVHPPGPSHVSELTQTEQTEEEDSSGETLSQLRERLELFTQERGEVLDKLEQLSAENLQLQARLEESSSSLQLLQREREKDLISSTSTSSNLSQELSSMQRSSEVVATLDAGEGGPVLFEKCEKSLSKLNSELEAYRKANDRQAKFNVSKKLAKEAKNCHTQLSELLHKVKEASTAVETVTVVETVVAVTAPNGKALAEYEQLNAQNAELKAVISRLRQELDELRESYPETEAPLAIVGSDSQREDEILQLQSQLEDARSLQAEQRQQIEEQVDQIKELRQTEAEQLQLVARQSAEITQLQLQSEQFDQLLNSKEMSHEKQLEQQTRIRRELEARAESLEGELSILQTLVAEQKQQLIESVSESEHALNLKMLELQSAQEELRELRAKEDPDQLREALRVSKSLVAQQVRELTSSQETVDALNQQIQEYQGLEHAHKEEQFKNRELREKLKKYALNLKKRTQDNADLEQKVQELTSQLQEQQELVKQKEEVEREPIVDNHRVEQLQQQVSKLNEDLKAKIHLNLENRDALRQLKQQIQEQEQLIQERDAELQDANLVSKELRRERQEADQEVFQLGQENSRLREEISKLQEEIHNLGQRVNEEPTAVEDLRRQLEAKSKKFEKSKELIKLRNATIQSLQRELQQLQQDQDSEVEHVRNARAAHEQLRLEKDAEITALRQEILKLERSRAAGEGDDTITKTSHQLLESQSQQQAESLQVAERELQQLRVQLTAAQEQHALLAQQYASDKANFEMTIARLETLHEGIQAKLQEDASYIESLEAQNTELQARSAALEEQAASQANQQAASQDKVQILEQQLKEQREQEEQKRQQDQQLQERFYELGQREQAQSRQLELLTSEAEESRQQLAGLRTEYESLLAKHSQLTATAQAEREQMSSHSQEELAELRQQLDVKEADLHRQRQVYDAKLAAKATELDELECDLNSHVERAAAETRELCQQLERSQELVAQRTEELQRLNEEFQEVERERSTLSREVTLLRLQHDSAEQDVLELQELRMQAMQDKTEMDNLRTQIDALCANHSQELQALQQRIAELDTLGQNQTDDQVYIETENKRLAEQLSELQAQLARQQHQQQQQQHHHPAVQSQQHPPPASLFFGGDALAAPSPFDEIAQPLRVSSLAASAPPPISPPPTIEDLQRNVSDLEKHAQDLETKLLARNQNLAEQEERRLQLEQRLSEVERLLSERTQQLADIQTANEERDRLAALEKLIQPAAAPTLDMFFGGQAEETVPDAVSHHLDLGLPQTEPVVEPLIQPKKAYLCQPKQEIQEQTAQTIDWGVDEDPWASAANEAPQTDVEHLHTRIAQLELQLSNAEQQKTELQTKAAKLMKRLKEYKTKATTTATPTVTVDNDLDSTIIEELKHQLQLQESRLSKAEEISQQHALEKEKLAKRIDVLTAGNDRMAEMKERQDMDVQMYQARIRELQEKLSQLDQWGEPAATVSSSLDGDEAARIESLQQEIQQLRQQVSELEDERTRDQAELGALRQSSQGYDEAEDNQKLELQQLRQQESELEALRTRDQSELEALRQSCQGHDETVRIATLQQDNQQLELQQLRQAIIELETLRARDQTELEALRQSSQGHDEAARIAIEQRDNQQLELQQLRQQLIELEALRARDQAELEALRQSCQGQQLSVDMASRNDEQMAQLQEKESEIVHLKQRIEELMREDQTEKLVFEILTKNQELQLLRMQVKQLEEDKEDQQVSAAPPKDDGETVEKLKSLCQQLQQEKSDMEEELRVLNNHVLSSLELEDRMKQTLLQLDTKNIEITELRRSLEILQSQNLGQNSAAEQIPDLSAINQQWEQLVEQKCGEVASIWQEHLSQREAAFKAQLEEVTQQQQRELPQSQQSTQGEATSDIMQKMQKALETQEMEIVTLKEQLAIRSAEYARLAAQYDPFRLQNRGGASGGNPASTTVSAGGPPSLTANEPLPEYVLKADLDYALMMLHQRDMRVEEMIVELVQLLEERDHLQLKLSDTLRQLETERSRVSDEPSATASSSAASSSSPSKISSAGSNSELLGTTSAAGSDLKQKLAELQTVKHSKDKVIVDEREQRLQQMLQLQKDMAKQGSGSQSGAGAVAAVAAPTSAAPTAIGVDLSQSGLRSPSMMLMDWILGNNNKEEEAGHQTTG</sequence>
<proteinExistence type="evidence at protein level"/>